<comment type="function">
    <text evidence="1">Attaches a formyl group to the free amino group of methionyl-tRNA(fMet). The formyl group appears to play a dual role in the initiator identity of N-formylmethionyl-tRNA by promoting its recognition by IF2 and preventing the misappropriation of this tRNA by the elongation apparatus.</text>
</comment>
<comment type="catalytic activity">
    <reaction evidence="1">
        <text>L-methionyl-tRNA(fMet) + (6R)-10-formyltetrahydrofolate = N-formyl-L-methionyl-tRNA(fMet) + (6S)-5,6,7,8-tetrahydrofolate + H(+)</text>
        <dbReference type="Rhea" id="RHEA:24380"/>
        <dbReference type="Rhea" id="RHEA-COMP:9952"/>
        <dbReference type="Rhea" id="RHEA-COMP:9953"/>
        <dbReference type="ChEBI" id="CHEBI:15378"/>
        <dbReference type="ChEBI" id="CHEBI:57453"/>
        <dbReference type="ChEBI" id="CHEBI:78530"/>
        <dbReference type="ChEBI" id="CHEBI:78844"/>
        <dbReference type="ChEBI" id="CHEBI:195366"/>
        <dbReference type="EC" id="2.1.2.9"/>
    </reaction>
</comment>
<comment type="similarity">
    <text evidence="1">Belongs to the Fmt family.</text>
</comment>
<keyword id="KW-0648">Protein biosynthesis</keyword>
<keyword id="KW-0808">Transferase</keyword>
<sequence>MSKIIFMGTPDFSTKILEMLIAEHEVIAVVTQPDRPVGRKKVMTPPPVKRVATKHQIPVYQPEKLKDSQELESLLSLESDLIVTAAFGQLLPESLLNAPKLGAINVHASLLPKYRGGAPIHQAIIDGEEETGITIMYMVKKLDAGNIISQQSIRIEEEDNVGTMHDKLSFLGAELLKKTLPSIIDNTNDSIPQDDALATFASNIRREDERVDWNMSAQAIHNHIRGLSPWPVAYTTMNEKNLKLFSAFIVKGKKGNPGTIIETTKHELIIATGSDDAIALTEIQPAGKKRMKVTDYLSGVQESLVGKVLL</sequence>
<proteinExistence type="inferred from homology"/>
<accession>Q8CSW1</accession>
<evidence type="ECO:0000255" key="1">
    <source>
        <dbReference type="HAMAP-Rule" id="MF_00182"/>
    </source>
</evidence>
<protein>
    <recommendedName>
        <fullName evidence="1">Methionyl-tRNA formyltransferase</fullName>
        <ecNumber evidence="1">2.1.2.9</ecNumber>
    </recommendedName>
</protein>
<organism>
    <name type="scientific">Staphylococcus epidermidis (strain ATCC 12228 / FDA PCI 1200)</name>
    <dbReference type="NCBI Taxonomy" id="176280"/>
    <lineage>
        <taxon>Bacteria</taxon>
        <taxon>Bacillati</taxon>
        <taxon>Bacillota</taxon>
        <taxon>Bacilli</taxon>
        <taxon>Bacillales</taxon>
        <taxon>Staphylococcaceae</taxon>
        <taxon>Staphylococcus</taxon>
    </lineage>
</organism>
<reference key="1">
    <citation type="journal article" date="2003" name="Mol. Microbiol.">
        <title>Genome-based analysis of virulence genes in a non-biofilm-forming Staphylococcus epidermidis strain (ATCC 12228).</title>
        <authorList>
            <person name="Zhang Y.-Q."/>
            <person name="Ren S.-X."/>
            <person name="Li H.-L."/>
            <person name="Wang Y.-X."/>
            <person name="Fu G."/>
            <person name="Yang J."/>
            <person name="Qin Z.-Q."/>
            <person name="Miao Y.-G."/>
            <person name="Wang W.-Y."/>
            <person name="Chen R.-S."/>
            <person name="Shen Y."/>
            <person name="Chen Z."/>
            <person name="Yuan Z.-H."/>
            <person name="Zhao G.-P."/>
            <person name="Qu D."/>
            <person name="Danchin A."/>
            <person name="Wen Y.-M."/>
        </authorList>
    </citation>
    <scope>NUCLEOTIDE SEQUENCE [LARGE SCALE GENOMIC DNA]</scope>
    <source>
        <strain>ATCC 12228 / FDA PCI 1200</strain>
    </source>
</reference>
<feature type="chain" id="PRO_0000083051" description="Methionyl-tRNA formyltransferase">
    <location>
        <begin position="1"/>
        <end position="310"/>
    </location>
</feature>
<feature type="binding site" evidence="1">
    <location>
        <begin position="109"/>
        <end position="112"/>
    </location>
    <ligand>
        <name>(6S)-5,6,7,8-tetrahydrofolate</name>
        <dbReference type="ChEBI" id="CHEBI:57453"/>
    </ligand>
</feature>
<dbReference type="EC" id="2.1.2.9" evidence="1"/>
<dbReference type="EMBL" id="AE015929">
    <property type="protein sequence ID" value="AAO04488.1"/>
    <property type="molecule type" value="Genomic_DNA"/>
</dbReference>
<dbReference type="RefSeq" id="NP_764446.1">
    <property type="nucleotide sequence ID" value="NC_004461.1"/>
</dbReference>
<dbReference type="RefSeq" id="WP_002439455.1">
    <property type="nucleotide sequence ID" value="NZ_WBME01000001.1"/>
</dbReference>
<dbReference type="SMR" id="Q8CSW1"/>
<dbReference type="GeneID" id="50018971"/>
<dbReference type="KEGG" id="sep:SE_0891"/>
<dbReference type="PATRIC" id="fig|176280.10.peg.864"/>
<dbReference type="eggNOG" id="COG0223">
    <property type="taxonomic scope" value="Bacteria"/>
</dbReference>
<dbReference type="HOGENOM" id="CLU_033347_1_1_9"/>
<dbReference type="OrthoDB" id="9802815at2"/>
<dbReference type="Proteomes" id="UP000001411">
    <property type="component" value="Chromosome"/>
</dbReference>
<dbReference type="GO" id="GO:0005829">
    <property type="term" value="C:cytosol"/>
    <property type="evidence" value="ECO:0007669"/>
    <property type="project" value="TreeGrafter"/>
</dbReference>
<dbReference type="GO" id="GO:0004479">
    <property type="term" value="F:methionyl-tRNA formyltransferase activity"/>
    <property type="evidence" value="ECO:0007669"/>
    <property type="project" value="UniProtKB-UniRule"/>
</dbReference>
<dbReference type="CDD" id="cd08646">
    <property type="entry name" value="FMT_core_Met-tRNA-FMT_N"/>
    <property type="match status" value="1"/>
</dbReference>
<dbReference type="CDD" id="cd08704">
    <property type="entry name" value="Met_tRNA_FMT_C"/>
    <property type="match status" value="1"/>
</dbReference>
<dbReference type="FunFam" id="3.40.50.170:FF:000004">
    <property type="entry name" value="Methionyl-tRNA formyltransferase"/>
    <property type="match status" value="1"/>
</dbReference>
<dbReference type="Gene3D" id="3.10.25.10">
    <property type="entry name" value="Formyl transferase, C-terminal domain"/>
    <property type="match status" value="1"/>
</dbReference>
<dbReference type="Gene3D" id="3.40.50.170">
    <property type="entry name" value="Formyl transferase, N-terminal domain"/>
    <property type="match status" value="1"/>
</dbReference>
<dbReference type="HAMAP" id="MF_00182">
    <property type="entry name" value="Formyl_trans"/>
    <property type="match status" value="1"/>
</dbReference>
<dbReference type="InterPro" id="IPR005794">
    <property type="entry name" value="Fmt"/>
</dbReference>
<dbReference type="InterPro" id="IPR005793">
    <property type="entry name" value="Formyl_trans_C"/>
</dbReference>
<dbReference type="InterPro" id="IPR037022">
    <property type="entry name" value="Formyl_trans_C_sf"/>
</dbReference>
<dbReference type="InterPro" id="IPR002376">
    <property type="entry name" value="Formyl_transf_N"/>
</dbReference>
<dbReference type="InterPro" id="IPR036477">
    <property type="entry name" value="Formyl_transf_N_sf"/>
</dbReference>
<dbReference type="InterPro" id="IPR011034">
    <property type="entry name" value="Formyl_transferase-like_C_sf"/>
</dbReference>
<dbReference type="InterPro" id="IPR001555">
    <property type="entry name" value="GART_AS"/>
</dbReference>
<dbReference type="InterPro" id="IPR044135">
    <property type="entry name" value="Met-tRNA-FMT_C"/>
</dbReference>
<dbReference type="InterPro" id="IPR041711">
    <property type="entry name" value="Met-tRNA-FMT_N"/>
</dbReference>
<dbReference type="NCBIfam" id="TIGR00460">
    <property type="entry name" value="fmt"/>
    <property type="match status" value="1"/>
</dbReference>
<dbReference type="PANTHER" id="PTHR11138">
    <property type="entry name" value="METHIONYL-TRNA FORMYLTRANSFERASE"/>
    <property type="match status" value="1"/>
</dbReference>
<dbReference type="PANTHER" id="PTHR11138:SF5">
    <property type="entry name" value="METHIONYL-TRNA FORMYLTRANSFERASE, MITOCHONDRIAL"/>
    <property type="match status" value="1"/>
</dbReference>
<dbReference type="Pfam" id="PF02911">
    <property type="entry name" value="Formyl_trans_C"/>
    <property type="match status" value="1"/>
</dbReference>
<dbReference type="Pfam" id="PF00551">
    <property type="entry name" value="Formyl_trans_N"/>
    <property type="match status" value="1"/>
</dbReference>
<dbReference type="SUPFAM" id="SSF50486">
    <property type="entry name" value="FMT C-terminal domain-like"/>
    <property type="match status" value="1"/>
</dbReference>
<dbReference type="SUPFAM" id="SSF53328">
    <property type="entry name" value="Formyltransferase"/>
    <property type="match status" value="1"/>
</dbReference>
<dbReference type="PROSITE" id="PS00373">
    <property type="entry name" value="GART"/>
    <property type="match status" value="1"/>
</dbReference>
<gene>
    <name evidence="1" type="primary">fmt</name>
    <name type="ordered locus">SE_0891</name>
</gene>
<name>FMT_STAES</name>